<sequence length="43" mass="4850">MRDLKTYLSVAPVLSALWFGALAGLLIEINRFFPDALTFPFFS</sequence>
<protein>
    <recommendedName>
        <fullName evidence="1">Photosystem I reaction center subunit IX</fullName>
    </recommendedName>
    <alternativeName>
        <fullName evidence="1">PSI-J</fullName>
    </alternativeName>
</protein>
<comment type="function">
    <text evidence="1">May help in the organization of the PsaE and PsaF subunits.</text>
</comment>
<comment type="subcellular location">
    <subcellularLocation>
        <location evidence="1">Plastid</location>
        <location evidence="1">Chloroplast thylakoid membrane</location>
        <topology evidence="1">Single-pass membrane protein</topology>
    </subcellularLocation>
</comment>
<comment type="similarity">
    <text evidence="1">Belongs to the PsaJ family.</text>
</comment>
<evidence type="ECO:0000255" key="1">
    <source>
        <dbReference type="HAMAP-Rule" id="MF_00522"/>
    </source>
</evidence>
<feature type="chain" id="PRO_0000354162" description="Photosystem I reaction center subunit IX">
    <location>
        <begin position="1"/>
        <end position="43"/>
    </location>
</feature>
<feature type="transmembrane region" description="Helical" evidence="1">
    <location>
        <begin position="7"/>
        <end position="27"/>
    </location>
</feature>
<keyword id="KW-0150">Chloroplast</keyword>
<keyword id="KW-0472">Membrane</keyword>
<keyword id="KW-0602">Photosynthesis</keyword>
<keyword id="KW-0603">Photosystem I</keyword>
<keyword id="KW-0934">Plastid</keyword>
<keyword id="KW-0793">Thylakoid</keyword>
<keyword id="KW-0812">Transmembrane</keyword>
<keyword id="KW-1133">Transmembrane helix</keyword>
<gene>
    <name evidence="1" type="primary">psaJ</name>
</gene>
<organism>
    <name type="scientific">Oenothera argillicola</name>
    <name type="common">Appalachian evening primrose</name>
    <dbReference type="NCBI Taxonomy" id="3940"/>
    <lineage>
        <taxon>Eukaryota</taxon>
        <taxon>Viridiplantae</taxon>
        <taxon>Streptophyta</taxon>
        <taxon>Embryophyta</taxon>
        <taxon>Tracheophyta</taxon>
        <taxon>Spermatophyta</taxon>
        <taxon>Magnoliopsida</taxon>
        <taxon>eudicotyledons</taxon>
        <taxon>Gunneridae</taxon>
        <taxon>Pentapetalae</taxon>
        <taxon>rosids</taxon>
        <taxon>malvids</taxon>
        <taxon>Myrtales</taxon>
        <taxon>Onagraceae</taxon>
        <taxon>Onagroideae</taxon>
        <taxon>Onagreae</taxon>
        <taxon>Oenothera</taxon>
    </lineage>
</organism>
<reference key="1">
    <citation type="journal article" date="2008" name="Nucleic Acids Res.">
        <title>The complete nucleotide sequences of the five genetically distinct plastid genomes of Oenothera, subsection Oenothera: I. Sequence evaluation and plastome evolution.</title>
        <authorList>
            <person name="Greiner S."/>
            <person name="Wang X."/>
            <person name="Rauwolf U."/>
            <person name="Silber M.V."/>
            <person name="Mayer K."/>
            <person name="Meurer J."/>
            <person name="Haberer G."/>
            <person name="Herrmann R.G."/>
        </authorList>
    </citation>
    <scope>NUCLEOTIDE SEQUENCE [LARGE SCALE GENOMIC DNA]</scope>
    <source>
        <strain>cv. Douthat 1</strain>
    </source>
</reference>
<dbReference type="EMBL" id="EU262887">
    <property type="protein sequence ID" value="ABW98724.1"/>
    <property type="molecule type" value="Genomic_DNA"/>
</dbReference>
<dbReference type="RefSeq" id="YP_001687157.1">
    <property type="nucleotide sequence ID" value="NC_010358.2"/>
</dbReference>
<dbReference type="SMR" id="B0Z4P6"/>
<dbReference type="GeneID" id="5951893"/>
<dbReference type="GO" id="GO:0009535">
    <property type="term" value="C:chloroplast thylakoid membrane"/>
    <property type="evidence" value="ECO:0007669"/>
    <property type="project" value="UniProtKB-SubCell"/>
</dbReference>
<dbReference type="GO" id="GO:0009522">
    <property type="term" value="C:photosystem I"/>
    <property type="evidence" value="ECO:0007669"/>
    <property type="project" value="UniProtKB-KW"/>
</dbReference>
<dbReference type="GO" id="GO:0015979">
    <property type="term" value="P:photosynthesis"/>
    <property type="evidence" value="ECO:0007669"/>
    <property type="project" value="UniProtKB-UniRule"/>
</dbReference>
<dbReference type="FunFam" id="1.20.5.510:FF:000001">
    <property type="entry name" value="Photosystem I reaction center subunit IX"/>
    <property type="match status" value="1"/>
</dbReference>
<dbReference type="Gene3D" id="1.20.5.510">
    <property type="entry name" value="Single helix bin"/>
    <property type="match status" value="1"/>
</dbReference>
<dbReference type="HAMAP" id="MF_00522">
    <property type="entry name" value="PSI_PsaJ"/>
    <property type="match status" value="1"/>
</dbReference>
<dbReference type="InterPro" id="IPR002615">
    <property type="entry name" value="PSI_PsaJ"/>
</dbReference>
<dbReference type="InterPro" id="IPR036062">
    <property type="entry name" value="PSI_PsaJ_sf"/>
</dbReference>
<dbReference type="PANTHER" id="PTHR36082">
    <property type="match status" value="1"/>
</dbReference>
<dbReference type="PANTHER" id="PTHR36082:SF2">
    <property type="entry name" value="PHOTOSYSTEM I REACTION CENTER SUBUNIT IX"/>
    <property type="match status" value="1"/>
</dbReference>
<dbReference type="Pfam" id="PF01701">
    <property type="entry name" value="PSI_PsaJ"/>
    <property type="match status" value="1"/>
</dbReference>
<dbReference type="SUPFAM" id="SSF81544">
    <property type="entry name" value="Subunit IX of photosystem I reaction centre, PsaJ"/>
    <property type="match status" value="1"/>
</dbReference>
<proteinExistence type="inferred from homology"/>
<geneLocation type="chloroplast"/>
<name>PSAJ_OENAR</name>
<accession>B0Z4P6</accession>